<gene>
    <name evidence="1" type="primary">rhmA</name>
    <name type="ordered locus">ECP_2288</name>
</gene>
<accession>Q0TFJ7</accession>
<keyword id="KW-0456">Lyase</keyword>
<keyword id="KW-0460">Magnesium</keyword>
<keyword id="KW-0479">Metal-binding</keyword>
<protein>
    <recommendedName>
        <fullName evidence="1">2-keto-3-deoxy-L-rhamnonate aldolase</fullName>
        <shortName evidence="1">KDR aldolase</shortName>
        <ecNumber evidence="1">4.1.2.53</ecNumber>
    </recommendedName>
    <alternativeName>
        <fullName evidence="1">2-dehydro-3-deoxyrhamnonate aldolase</fullName>
    </alternativeName>
</protein>
<feature type="chain" id="PRO_0000353167" description="2-keto-3-deoxy-L-rhamnonate aldolase">
    <location>
        <begin position="1"/>
        <end position="267"/>
    </location>
</feature>
<feature type="active site" description="Proton acceptor" evidence="1">
    <location>
        <position position="49"/>
    </location>
</feature>
<feature type="binding site" evidence="1">
    <location>
        <position position="151"/>
    </location>
    <ligand>
        <name>substrate</name>
    </ligand>
</feature>
<feature type="binding site" evidence="1">
    <location>
        <position position="153"/>
    </location>
    <ligand>
        <name>Mg(2+)</name>
        <dbReference type="ChEBI" id="CHEBI:18420"/>
    </ligand>
</feature>
<feature type="binding site" evidence="1">
    <location>
        <position position="178"/>
    </location>
    <ligand>
        <name>substrate</name>
    </ligand>
</feature>
<feature type="binding site" evidence="1">
    <location>
        <position position="179"/>
    </location>
    <ligand>
        <name>Mg(2+)</name>
        <dbReference type="ChEBI" id="CHEBI:18420"/>
    </ligand>
</feature>
<feature type="binding site" evidence="1">
    <location>
        <position position="179"/>
    </location>
    <ligand>
        <name>substrate</name>
    </ligand>
</feature>
<feature type="site" description="Transition state stabilizer" evidence="1">
    <location>
        <position position="74"/>
    </location>
</feature>
<feature type="site" description="Increases basicity of active site His" evidence="1">
    <location>
        <position position="88"/>
    </location>
</feature>
<proteinExistence type="inferred from homology"/>
<sequence>MNALLTNPFKERLRKGEVQIGLWLSSTTAYMAEIAATSGYDWLLIDGEHAPNTIQDLYHQLQAVAPYASHPVIRPVEGSKPLIKQVLDIGAQTLLIPMVDTADQARQVVSATRYPPYGERGVGASVARAARWGRIENYMAQVNDSLCLLVQVESKTALDNLDEILDVEGIDGVFIGPADLSASLGYPDNAGHQEVQRIIETSIRRIRAAGKAAGFLAVAPDMAQQCLAWGTNFVAVGVDTMLYSDALDQRLAMFKSGKNGPRVKGSY</sequence>
<name>RHMA_ECOL5</name>
<reference key="1">
    <citation type="journal article" date="2006" name="Mol. Microbiol.">
        <title>Role of pathogenicity island-associated integrases in the genome plasticity of uropathogenic Escherichia coli strain 536.</title>
        <authorList>
            <person name="Hochhut B."/>
            <person name="Wilde C."/>
            <person name="Balling G."/>
            <person name="Middendorf B."/>
            <person name="Dobrindt U."/>
            <person name="Brzuszkiewicz E."/>
            <person name="Gottschalk G."/>
            <person name="Carniel E."/>
            <person name="Hacker J."/>
        </authorList>
    </citation>
    <scope>NUCLEOTIDE SEQUENCE [LARGE SCALE GENOMIC DNA]</scope>
    <source>
        <strain>536 / UPEC</strain>
    </source>
</reference>
<comment type="function">
    <text evidence="1">Catalyzes the reversible retro-aldol cleavage of 2-keto-3-deoxy-L-rhamnonate (KDR) to pyruvate and lactaldehyde.</text>
</comment>
<comment type="catalytic activity">
    <reaction evidence="1">
        <text>2-dehydro-3-deoxy-L-rhamnonate = (S)-lactaldehyde + pyruvate</text>
        <dbReference type="Rhea" id="RHEA:25784"/>
        <dbReference type="ChEBI" id="CHEBI:15361"/>
        <dbReference type="ChEBI" id="CHEBI:18041"/>
        <dbReference type="ChEBI" id="CHEBI:58371"/>
        <dbReference type="EC" id="4.1.2.53"/>
    </reaction>
</comment>
<comment type="cofactor">
    <cofactor evidence="1">
        <name>Mg(2+)</name>
        <dbReference type="ChEBI" id="CHEBI:18420"/>
    </cofactor>
    <text evidence="1">Binds 1 Mg(2+) ion per subunit.</text>
</comment>
<comment type="subunit">
    <text evidence="1">Homohexamer.</text>
</comment>
<comment type="similarity">
    <text evidence="1">Belongs to the HpcH/HpaI aldolase family. KDR aldolase subfamily.</text>
</comment>
<organism>
    <name type="scientific">Escherichia coli O6:K15:H31 (strain 536 / UPEC)</name>
    <dbReference type="NCBI Taxonomy" id="362663"/>
    <lineage>
        <taxon>Bacteria</taxon>
        <taxon>Pseudomonadati</taxon>
        <taxon>Pseudomonadota</taxon>
        <taxon>Gammaproteobacteria</taxon>
        <taxon>Enterobacterales</taxon>
        <taxon>Enterobacteriaceae</taxon>
        <taxon>Escherichia</taxon>
    </lineage>
</organism>
<dbReference type="EC" id="4.1.2.53" evidence="1"/>
<dbReference type="EMBL" id="CP000247">
    <property type="protein sequence ID" value="ABG70282.1"/>
    <property type="molecule type" value="Genomic_DNA"/>
</dbReference>
<dbReference type="RefSeq" id="WP_000992978.1">
    <property type="nucleotide sequence ID" value="NC_008253.1"/>
</dbReference>
<dbReference type="SMR" id="Q0TFJ7"/>
<dbReference type="KEGG" id="ecp:ECP_2288"/>
<dbReference type="HOGENOM" id="CLU_059964_1_0_6"/>
<dbReference type="Proteomes" id="UP000009182">
    <property type="component" value="Chromosome"/>
</dbReference>
<dbReference type="GO" id="GO:0005737">
    <property type="term" value="C:cytoplasm"/>
    <property type="evidence" value="ECO:0007669"/>
    <property type="project" value="TreeGrafter"/>
</dbReference>
<dbReference type="GO" id="GO:0106099">
    <property type="term" value="F:2-keto-3-deoxy-L-rhamnonate aldolase activity"/>
    <property type="evidence" value="ECO:0007669"/>
    <property type="project" value="UniProtKB-EC"/>
</dbReference>
<dbReference type="GO" id="GO:0000287">
    <property type="term" value="F:magnesium ion binding"/>
    <property type="evidence" value="ECO:0007669"/>
    <property type="project" value="UniProtKB-UniRule"/>
</dbReference>
<dbReference type="FunFam" id="3.20.20.60:FF:000004">
    <property type="entry name" value="5-keto-4-deoxy-D-glucarate aldolase"/>
    <property type="match status" value="1"/>
</dbReference>
<dbReference type="Gene3D" id="3.20.20.60">
    <property type="entry name" value="Phosphoenolpyruvate-binding domains"/>
    <property type="match status" value="1"/>
</dbReference>
<dbReference type="HAMAP" id="MF_01290">
    <property type="entry name" value="KDR_aldolase"/>
    <property type="match status" value="1"/>
</dbReference>
<dbReference type="InterPro" id="IPR005000">
    <property type="entry name" value="Aldolase/citrate-lyase_domain"/>
</dbReference>
<dbReference type="InterPro" id="IPR050251">
    <property type="entry name" value="HpcH-HpaI_aldolase"/>
</dbReference>
<dbReference type="InterPro" id="IPR023593">
    <property type="entry name" value="KDR_aldolase"/>
</dbReference>
<dbReference type="InterPro" id="IPR015813">
    <property type="entry name" value="Pyrv/PenolPyrv_kinase-like_dom"/>
</dbReference>
<dbReference type="InterPro" id="IPR040442">
    <property type="entry name" value="Pyrv_kinase-like_dom_sf"/>
</dbReference>
<dbReference type="NCBIfam" id="NF007521">
    <property type="entry name" value="PRK10128.1"/>
    <property type="match status" value="1"/>
</dbReference>
<dbReference type="PANTHER" id="PTHR30502">
    <property type="entry name" value="2-KETO-3-DEOXY-L-RHAMNONATE ALDOLASE"/>
    <property type="match status" value="1"/>
</dbReference>
<dbReference type="PANTHER" id="PTHR30502:SF5">
    <property type="entry name" value="2-KETO-3-DEOXY-L-RHAMNONATE ALDOLASE"/>
    <property type="match status" value="1"/>
</dbReference>
<dbReference type="Pfam" id="PF03328">
    <property type="entry name" value="HpcH_HpaI"/>
    <property type="match status" value="1"/>
</dbReference>
<dbReference type="SUPFAM" id="SSF51621">
    <property type="entry name" value="Phosphoenolpyruvate/pyruvate domain"/>
    <property type="match status" value="1"/>
</dbReference>
<evidence type="ECO:0000255" key="1">
    <source>
        <dbReference type="HAMAP-Rule" id="MF_01290"/>
    </source>
</evidence>